<proteinExistence type="inferred from homology"/>
<organism>
    <name type="scientific">Candida albicans (strain SC5314 / ATCC MYA-2876)</name>
    <name type="common">Yeast</name>
    <dbReference type="NCBI Taxonomy" id="237561"/>
    <lineage>
        <taxon>Eukaryota</taxon>
        <taxon>Fungi</taxon>
        <taxon>Dikarya</taxon>
        <taxon>Ascomycota</taxon>
        <taxon>Saccharomycotina</taxon>
        <taxon>Pichiomycetes</taxon>
        <taxon>Debaryomycetaceae</taxon>
        <taxon>Candida/Lodderomyces clade</taxon>
        <taxon>Candida</taxon>
    </lineage>
</organism>
<keyword id="KW-0067">ATP-binding</keyword>
<keyword id="KW-0472">Membrane</keyword>
<keyword id="KW-0547">Nucleotide-binding</keyword>
<keyword id="KW-1185">Reference proteome</keyword>
<keyword id="KW-0677">Repeat</keyword>
<keyword id="KW-0812">Transmembrane</keyword>
<keyword id="KW-1133">Transmembrane helix</keyword>
<keyword id="KW-0813">Transport</keyword>
<dbReference type="EMBL" id="U63812">
    <property type="protein sequence ID" value="AAB96797.1"/>
    <property type="molecule type" value="Genomic_DNA"/>
</dbReference>
<dbReference type="EMBL" id="CP017625">
    <property type="protein sequence ID" value="AOW28505.1"/>
    <property type="molecule type" value="Genomic_DNA"/>
</dbReference>
<dbReference type="RefSeq" id="XP_723169.1">
    <property type="nucleotide sequence ID" value="XM_718076.2"/>
</dbReference>
<dbReference type="SMR" id="P78595"/>
<dbReference type="BioGRID" id="1218359">
    <property type="interactions" value="9"/>
</dbReference>
<dbReference type="FunCoup" id="P78595">
    <property type="interactions" value="412"/>
</dbReference>
<dbReference type="STRING" id="237561.P78595"/>
<dbReference type="BindingDB" id="P78595"/>
<dbReference type="ChEMBL" id="CHEMBL1163105"/>
<dbReference type="TCDB" id="3.A.1.205.5">
    <property type="family name" value="the atp-binding cassette (abc) superfamily"/>
</dbReference>
<dbReference type="EnsemblFungi" id="C3_04890W_A-T">
    <property type="protein sequence ID" value="C3_04890W_A-T-p1"/>
    <property type="gene ID" value="C3_04890W_A"/>
</dbReference>
<dbReference type="GeneID" id="3635265"/>
<dbReference type="KEGG" id="cal:CAALFM_C304890WA"/>
<dbReference type="CGD" id="CAL0000197349">
    <property type="gene designation" value="CDR2"/>
</dbReference>
<dbReference type="VEuPathDB" id="FungiDB:C3_04890W_A"/>
<dbReference type="eggNOG" id="KOG0065">
    <property type="taxonomic scope" value="Eukaryota"/>
</dbReference>
<dbReference type="HOGENOM" id="CLU_000604_35_0_1"/>
<dbReference type="InParanoid" id="P78595"/>
<dbReference type="OMA" id="EMNGIYM"/>
<dbReference type="OrthoDB" id="245989at2759"/>
<dbReference type="SABIO-RK" id="P78595"/>
<dbReference type="PRO" id="PR:P78595"/>
<dbReference type="Proteomes" id="UP000000559">
    <property type="component" value="Chromosome 3"/>
</dbReference>
<dbReference type="GO" id="GO:1903561">
    <property type="term" value="C:extracellular vesicle"/>
    <property type="evidence" value="ECO:0000314"/>
    <property type="project" value="CGD"/>
</dbReference>
<dbReference type="GO" id="GO:0016020">
    <property type="term" value="C:membrane"/>
    <property type="evidence" value="ECO:0000303"/>
    <property type="project" value="CGD"/>
</dbReference>
<dbReference type="GO" id="GO:0005886">
    <property type="term" value="C:plasma membrane"/>
    <property type="evidence" value="ECO:0000314"/>
    <property type="project" value="CGD"/>
</dbReference>
<dbReference type="GO" id="GO:0140359">
    <property type="term" value="F:ABC-type transporter activity"/>
    <property type="evidence" value="ECO:0007669"/>
    <property type="project" value="InterPro"/>
</dbReference>
<dbReference type="GO" id="GO:0005524">
    <property type="term" value="F:ATP binding"/>
    <property type="evidence" value="ECO:0007669"/>
    <property type="project" value="UniProtKB-KW"/>
</dbReference>
<dbReference type="GO" id="GO:0016887">
    <property type="term" value="F:ATP hydrolysis activity"/>
    <property type="evidence" value="ECO:0007669"/>
    <property type="project" value="InterPro"/>
</dbReference>
<dbReference type="GO" id="GO:0090554">
    <property type="term" value="F:phosphatidylcholine floppase activity"/>
    <property type="evidence" value="ECO:0000316"/>
    <property type="project" value="CGD"/>
</dbReference>
<dbReference type="GO" id="GO:0140341">
    <property type="term" value="F:phosphatidylethanolamine floppase activity"/>
    <property type="evidence" value="ECO:0000316"/>
    <property type="project" value="CGD"/>
</dbReference>
<dbReference type="GO" id="GO:0090556">
    <property type="term" value="F:phosphatidylserine floppase activity"/>
    <property type="evidence" value="ECO:0000316"/>
    <property type="project" value="CGD"/>
</dbReference>
<dbReference type="GO" id="GO:1990961">
    <property type="term" value="P:xenobiotic detoxification by transmembrane export across the plasma membrane"/>
    <property type="evidence" value="ECO:0000315"/>
    <property type="project" value="CGD"/>
</dbReference>
<dbReference type="CDD" id="cd03233">
    <property type="entry name" value="ABCG_PDR_domain1"/>
    <property type="match status" value="1"/>
</dbReference>
<dbReference type="CDD" id="cd03232">
    <property type="entry name" value="ABCG_PDR_domain2"/>
    <property type="match status" value="1"/>
</dbReference>
<dbReference type="FunFam" id="3.40.50.300:FF:000054">
    <property type="entry name" value="ABC multidrug transporter atrF"/>
    <property type="match status" value="1"/>
</dbReference>
<dbReference type="FunFam" id="3.40.50.300:FF:001262">
    <property type="entry name" value="ABC transporter CDR4"/>
    <property type="match status" value="1"/>
</dbReference>
<dbReference type="Gene3D" id="3.40.50.300">
    <property type="entry name" value="P-loop containing nucleotide triphosphate hydrolases"/>
    <property type="match status" value="2"/>
</dbReference>
<dbReference type="InterPro" id="IPR003593">
    <property type="entry name" value="AAA+_ATPase"/>
</dbReference>
<dbReference type="InterPro" id="IPR013525">
    <property type="entry name" value="ABC2_TM"/>
</dbReference>
<dbReference type="InterPro" id="IPR029481">
    <property type="entry name" value="ABC_trans_N"/>
</dbReference>
<dbReference type="InterPro" id="IPR003439">
    <property type="entry name" value="ABC_transporter-like_ATP-bd"/>
</dbReference>
<dbReference type="InterPro" id="IPR017871">
    <property type="entry name" value="ABC_transporter-like_CS"/>
</dbReference>
<dbReference type="InterPro" id="IPR034001">
    <property type="entry name" value="ABCG_PDR_1"/>
</dbReference>
<dbReference type="InterPro" id="IPR034003">
    <property type="entry name" value="ABCG_PDR_2"/>
</dbReference>
<dbReference type="InterPro" id="IPR005285">
    <property type="entry name" value="Drug-R_PDR/CDR"/>
</dbReference>
<dbReference type="InterPro" id="IPR027417">
    <property type="entry name" value="P-loop_NTPase"/>
</dbReference>
<dbReference type="InterPro" id="IPR010929">
    <property type="entry name" value="PDR_CDR_ABC"/>
</dbReference>
<dbReference type="NCBIfam" id="TIGR00956">
    <property type="entry name" value="3a01205"/>
    <property type="match status" value="1"/>
</dbReference>
<dbReference type="PANTHER" id="PTHR19241">
    <property type="entry name" value="ATP-BINDING CASSETTE TRANSPORTER"/>
    <property type="match status" value="1"/>
</dbReference>
<dbReference type="Pfam" id="PF01061">
    <property type="entry name" value="ABC2_membrane"/>
    <property type="match status" value="2"/>
</dbReference>
<dbReference type="Pfam" id="PF00005">
    <property type="entry name" value="ABC_tran"/>
    <property type="match status" value="2"/>
</dbReference>
<dbReference type="Pfam" id="PF14510">
    <property type="entry name" value="ABC_trans_N"/>
    <property type="match status" value="1"/>
</dbReference>
<dbReference type="Pfam" id="PF06422">
    <property type="entry name" value="PDR_CDR"/>
    <property type="match status" value="1"/>
</dbReference>
<dbReference type="SMART" id="SM00382">
    <property type="entry name" value="AAA"/>
    <property type="match status" value="2"/>
</dbReference>
<dbReference type="SUPFAM" id="SSF52540">
    <property type="entry name" value="P-loop containing nucleoside triphosphate hydrolases"/>
    <property type="match status" value="2"/>
</dbReference>
<dbReference type="PROSITE" id="PS00211">
    <property type="entry name" value="ABC_TRANSPORTER_1"/>
    <property type="match status" value="1"/>
</dbReference>
<dbReference type="PROSITE" id="PS50893">
    <property type="entry name" value="ABC_TRANSPORTER_2"/>
    <property type="match status" value="2"/>
</dbReference>
<comment type="function">
    <text>Multidrug efflux transporter. Confers resistance to azole antifungal agents, to other antifungals (terbinafine, amorolfine) and to a variety of metabolic inhibitors.</text>
</comment>
<comment type="subcellular location">
    <subcellularLocation>
        <location evidence="3">Membrane</location>
        <topology evidence="3">Multi-pass membrane protein</topology>
    </subcellularLocation>
</comment>
<comment type="similarity">
    <text evidence="3">Belongs to the ABC transporter superfamily. ABCG family. PDR (TC 3.A.1.205) subfamily.</text>
</comment>
<protein>
    <recommendedName>
        <fullName>Multidrug resistance protein CDR2</fullName>
    </recommendedName>
</protein>
<feature type="chain" id="PRO_0000093436" description="Multidrug resistance protein CDR2">
    <location>
        <begin position="1"/>
        <end position="1499"/>
    </location>
</feature>
<feature type="topological domain" description="Cytoplasmic" evidence="1">
    <location>
        <begin position="1"/>
        <end position="511"/>
    </location>
</feature>
<feature type="transmembrane region" description="Helical" evidence="1">
    <location>
        <begin position="512"/>
        <end position="532"/>
    </location>
</feature>
<feature type="transmembrane region" description="Helical" evidence="1">
    <location>
        <begin position="546"/>
        <end position="566"/>
    </location>
</feature>
<feature type="transmembrane region" description="Helical" evidence="1">
    <location>
        <begin position="596"/>
        <end position="616"/>
    </location>
</feature>
<feature type="transmembrane region" description="Helical" evidence="1">
    <location>
        <begin position="621"/>
        <end position="641"/>
    </location>
</feature>
<feature type="transmembrane region" description="Helical" evidence="1">
    <location>
        <begin position="660"/>
        <end position="680"/>
    </location>
</feature>
<feature type="transmembrane region" description="Helical" evidence="1">
    <location>
        <begin position="763"/>
        <end position="783"/>
    </location>
</feature>
<feature type="topological domain" description="Cytoplasmic" evidence="1">
    <location>
        <begin position="784"/>
        <end position="1193"/>
    </location>
</feature>
<feature type="transmembrane region" description="Helical" evidence="1">
    <location>
        <begin position="1194"/>
        <end position="1214"/>
    </location>
</feature>
<feature type="transmembrane region" description="Helical" evidence="1">
    <location>
        <begin position="1229"/>
        <end position="1249"/>
    </location>
</feature>
<feature type="transmembrane region" description="Helical" evidence="1">
    <location>
        <begin position="1279"/>
        <end position="1299"/>
    </location>
</feature>
<feature type="transmembrane region" description="Helical" evidence="1">
    <location>
        <begin position="1315"/>
        <end position="1335"/>
    </location>
</feature>
<feature type="transmembrane region" description="Helical" evidence="1">
    <location>
        <begin position="1354"/>
        <end position="1374"/>
    </location>
</feature>
<feature type="transmembrane region" description="Helical" evidence="1">
    <location>
        <begin position="1465"/>
        <end position="1485"/>
    </location>
</feature>
<feature type="domain" description="ABC transporter 1" evidence="2">
    <location>
        <begin position="148"/>
        <end position="402"/>
    </location>
</feature>
<feature type="domain" description="ABC transporter 2" evidence="2">
    <location>
        <begin position="857"/>
        <end position="1101"/>
    </location>
</feature>
<feature type="binding site" evidence="2">
    <location>
        <begin position="893"/>
        <end position="900"/>
    </location>
    <ligand>
        <name>ATP</name>
        <dbReference type="ChEBI" id="CHEBI:30616"/>
    </ligand>
</feature>
<feature type="sequence conflict" description="In Ref. 1; AAB96797." evidence="3" ref="1">
    <original>K</original>
    <variation>N</variation>
    <location>
        <position position="15"/>
    </location>
</feature>
<feature type="sequence conflict" description="In Ref. 1; AAB96797." evidence="3" ref="1">
    <original>A</original>
    <variation>G</variation>
    <location>
        <position position="475"/>
    </location>
</feature>
<feature type="sequence conflict" description="In Ref. 1; AAB96797." evidence="3" ref="1">
    <original>M</original>
    <variation>S</variation>
    <location>
        <position position="788"/>
    </location>
</feature>
<gene>
    <name type="primary">CDR2</name>
    <name type="ordered locus">CAALFM_C304890WA</name>
    <name type="ORF">CaO19.13379</name>
    <name type="ORF">CaO19.5958</name>
</gene>
<evidence type="ECO:0000255" key="1"/>
<evidence type="ECO:0000255" key="2">
    <source>
        <dbReference type="PROSITE-ProRule" id="PRU00434"/>
    </source>
</evidence>
<evidence type="ECO:0000305" key="3"/>
<name>CDR2_CANAL</name>
<accession>P78595</accession>
<accession>A0A1D8PK27</accession>
<accession>Q5ANE5</accession>
<reference key="1">
    <citation type="journal article" date="1997" name="Microbiology">
        <title>Cloning of Candida albicans genes conferring resistance to azole antifungal agents: characterization of CDR2, a new multidrug ABC transporter gene.</title>
        <authorList>
            <person name="Sanglard D."/>
            <person name="Ischer F."/>
            <person name="Monod M."/>
            <person name="Bille J."/>
        </authorList>
    </citation>
    <scope>NUCLEOTIDE SEQUENCE [GENOMIC DNA]</scope>
    <source>
        <strain>SC5314 / ATCC MYA-2876</strain>
    </source>
</reference>
<reference key="2">
    <citation type="journal article" date="2004" name="Proc. Natl. Acad. Sci. U.S.A.">
        <title>The diploid genome sequence of Candida albicans.</title>
        <authorList>
            <person name="Jones T."/>
            <person name="Federspiel N.A."/>
            <person name="Chibana H."/>
            <person name="Dungan J."/>
            <person name="Kalman S."/>
            <person name="Magee B.B."/>
            <person name="Newport G."/>
            <person name="Thorstenson Y.R."/>
            <person name="Agabian N."/>
            <person name="Magee P.T."/>
            <person name="Davis R.W."/>
            <person name="Scherer S."/>
        </authorList>
    </citation>
    <scope>NUCLEOTIDE SEQUENCE [LARGE SCALE GENOMIC DNA]</scope>
    <source>
        <strain>SC5314 / ATCC MYA-2876</strain>
    </source>
</reference>
<reference key="3">
    <citation type="journal article" date="2007" name="Genome Biol.">
        <title>Assembly of the Candida albicans genome into sixteen supercontigs aligned on the eight chromosomes.</title>
        <authorList>
            <person name="van het Hoog M."/>
            <person name="Rast T.J."/>
            <person name="Martchenko M."/>
            <person name="Grindle S."/>
            <person name="Dignard D."/>
            <person name="Hogues H."/>
            <person name="Cuomo C."/>
            <person name="Berriman M."/>
            <person name="Scherer S."/>
            <person name="Magee B.B."/>
            <person name="Whiteway M."/>
            <person name="Chibana H."/>
            <person name="Nantel A."/>
            <person name="Magee P.T."/>
        </authorList>
    </citation>
    <scope>GENOME REANNOTATION</scope>
    <source>
        <strain>SC5314 / ATCC MYA-2876</strain>
    </source>
</reference>
<reference key="4">
    <citation type="journal article" date="2013" name="Genome Biol.">
        <title>Assembly of a phased diploid Candida albicans genome facilitates allele-specific measurements and provides a simple model for repeat and indel structure.</title>
        <authorList>
            <person name="Muzzey D."/>
            <person name="Schwartz K."/>
            <person name="Weissman J.S."/>
            <person name="Sherlock G."/>
        </authorList>
    </citation>
    <scope>NUCLEOTIDE SEQUENCE [LARGE SCALE GENOMIC DNA]</scope>
    <scope>GENOME REANNOTATION</scope>
    <source>
        <strain>SC5314 / ATCC MYA-2876</strain>
    </source>
</reference>
<sequence length="1499" mass="168965">MSTANTSLSQQLDEKPWVDASDNSSVQEYQGFDATASHNIQDLARKLTHGSTNGDHHSANDLARYLSHMSDIPGVSPFNGNISHEQLDPDSENFNAKYWVKNLKKLFESDSDYYKPSKLGVAYRNLRAYGIANDSDYQPTVTNALWKFTTEAINKLKKPDDSKYFDILKSMDAIMRPGELTVVLGRPGAGCSTLLKTIAVNTYGFHIGKESQITYDGLSPHDIERHYRGDVIYSAETDVHFPHLSVGDTLEFAARLRTPQNRGEGIDRETYAKHMASVYMATYGLSHTRNTNVGNDFVRGVSGGERKRVSIAEASLSGANIQCWDNATRGLDSATALEFIRALKTSATILDTTPLIAIYQCSQDAYELFDNVVVLYEGYQIFFGKASKAKEYFENMGWKCPQRQTTADFLTSLTNPAEREPLPGYEDKVPRTAQEFETFWKNSPEYAELTKEIDEYFVECERSNTGETYRESHVAKQSNNTRPSSPYTVSFFMQVRYVIARNFLRMKGDPSIPLISILSQLVMGLILASVFFNLRKSTDTFYFRGGALFFSVLFNAFSSLLEILSLYEARPIVEKHRKYALYRPSADALASIISELPVKLLMTMSFNIVYYFMVNLRRTAGNFFFYWLMCASCTLVMSHMFRSIGAVTTTIATAMSLSTVFLLAMIIYAGFVLPIPYILGWSRWIRYINPVTYIFESLMVNEFHGREFECGQYIPSGPGFENLPVENKVCTTVGSTPGSTVVQGTEYIKLAYQFYSSHKWRNFGITVAFAVFFLGVYVALTEFNKGAMQKGEIVLFLKGSLKKHKRKTAASNKGDIEAGPVAGKLDYQDEAEAVNNEKFTEKGSTGSVDFPENREIFFWRDLTYQVKIKKEDRVILDHVDGWVKPGQITALMGASGAGKTTLLNCLSERVTTGIITDGERLVNGHALDSSFQRSIGYVQQQDVHLETTTVREALQFSAYLRQSNKISKKEKDDYVDYVIDLLEMTDYADALVGVAGEGLNVEQRKRLTIGVELVAKPKLLLFLDEPTSGLDSQTAWSICKLMRKLADHGQAILCTIHQPSALIMAEFDKLLFLQKGGRTAYFGELGENCQTMINYFEKYGADPCPKEANPAEWMLQVVGAAPGSHAKQDYFEVWRNSSEYQAVREEINRMEAELSKLPRDNDPEALLKYAAPLWKQYLLVSWRTIVQDWRSPGYIYSKLILVISSSLFIGFSFFKSKNNLQGLQSQMLAVFMFFVPFTTFIDQMLPYFVKHRAVYEVREAPSRTFSWFAFIAGQITSEIPFQIVVGTISYFCWYYPVGLYANAEPTDSVNSRGVLMWMLLTAFYVYTSTMGQLAISLNELIDNAANLATTLFTLCLMFCGVLAGPNVIPGFWIFMYRCNPFTYLIQAILSTGLANAKVTCAPRELVTLKPPMGETCSSFIGPYTEAAGGYFSTNSDGTCSVCRIDSTNQFLESINALFSQRWRNFGIFVAFIGINIILTIFFYWLARVPKGNREKKMKK</sequence>